<reference evidence="7" key="1">
    <citation type="journal article" date="2014" name="Fish Physiol. Biochem.">
        <title>Teleost fish osteocalcin 1 and 2 share the ability to bind the calcium mineral phase.</title>
        <authorList>
            <person name="Cavaco S."/>
            <person name="Williamson M.K."/>
            <person name="Rosa J."/>
            <person name="Roberto V."/>
            <person name="Cordeiro O."/>
            <person name="Price P.A."/>
            <person name="Leonor Cancela M."/>
            <person name="Laize V."/>
            <person name="Simes D.C."/>
        </authorList>
    </citation>
    <scope>PROTEIN SEQUENCE</scope>
    <scope>SUBCELLULAR LOCATION</scope>
    <scope>PHOSPHORYLATION AT THR-6</scope>
    <source>
        <tissue evidence="6">Bone</tissue>
    </source>
</reference>
<keyword id="KW-0091">Biomineralization</keyword>
<keyword id="KW-0106">Calcium</keyword>
<keyword id="KW-0903">Direct protein sequencing</keyword>
<keyword id="KW-1015">Disulfide bond</keyword>
<keyword id="KW-0301">Gamma-carboxyglutamic acid</keyword>
<keyword id="KW-0372">Hormone</keyword>
<keyword id="KW-0479">Metal-binding</keyword>
<keyword id="KW-0597">Phosphoprotein</keyword>
<keyword id="KW-0964">Secreted</keyword>
<proteinExistence type="evidence at protein level"/>
<comment type="function">
    <text evidence="2">The carboxylated form is one of the main organic components of the bone matrix, which constitutes 1-2% of the total bone protein (By similarity). The carboxylated form binds strongly to apatite and calcium (By similarity).</text>
</comment>
<comment type="subcellular location">
    <subcellularLocation>
        <location evidence="5">Secreted</location>
    </subcellularLocation>
</comment>
<comment type="PTM">
    <text evidence="4">Gamma-carboxyglutamate residues are formed by vitamin K dependent carboxylation by GGCX. These residues are essential for the binding of calcium.</text>
</comment>
<comment type="similarity">
    <text evidence="7">Belongs to the osteocalcin/matrix Gla protein family.</text>
</comment>
<sequence length="46" mass="4799">AVPAGTLSPLQMESLREVCEVNVACDEMADTAGIVAAYTXFYGPVP</sequence>
<accession>P86863</accession>
<accession>P86864</accession>
<dbReference type="iPTMnet" id="P86863"/>
<dbReference type="GO" id="GO:0005576">
    <property type="term" value="C:extracellular region"/>
    <property type="evidence" value="ECO:0007669"/>
    <property type="project" value="UniProtKB-SubCell"/>
</dbReference>
<dbReference type="GO" id="GO:0005509">
    <property type="term" value="F:calcium ion binding"/>
    <property type="evidence" value="ECO:0007669"/>
    <property type="project" value="InterPro"/>
</dbReference>
<dbReference type="GO" id="GO:0005179">
    <property type="term" value="F:hormone activity"/>
    <property type="evidence" value="ECO:0000250"/>
    <property type="project" value="UniProtKB"/>
</dbReference>
<dbReference type="GO" id="GO:0046848">
    <property type="term" value="F:hydroxyapatite binding"/>
    <property type="evidence" value="ECO:0007669"/>
    <property type="project" value="TreeGrafter"/>
</dbReference>
<dbReference type="GO" id="GO:0008147">
    <property type="term" value="F:structural constituent of bone"/>
    <property type="evidence" value="ECO:0000250"/>
    <property type="project" value="UniProtKB"/>
</dbReference>
<dbReference type="GO" id="GO:0031214">
    <property type="term" value="P:biomineral tissue development"/>
    <property type="evidence" value="ECO:0007669"/>
    <property type="project" value="UniProtKB-KW"/>
</dbReference>
<dbReference type="GO" id="GO:0060348">
    <property type="term" value="P:bone development"/>
    <property type="evidence" value="ECO:0007669"/>
    <property type="project" value="InterPro"/>
</dbReference>
<dbReference type="GO" id="GO:0032869">
    <property type="term" value="P:cellular response to insulin stimulus"/>
    <property type="evidence" value="ECO:0000250"/>
    <property type="project" value="UniProtKB"/>
</dbReference>
<dbReference type="GO" id="GO:0042593">
    <property type="term" value="P:glucose homeostasis"/>
    <property type="evidence" value="ECO:0000250"/>
    <property type="project" value="UniProtKB"/>
</dbReference>
<dbReference type="GO" id="GO:1903011">
    <property type="term" value="P:negative regulation of bone development"/>
    <property type="evidence" value="ECO:0000250"/>
    <property type="project" value="UniProtKB"/>
</dbReference>
<dbReference type="GO" id="GO:0001649">
    <property type="term" value="P:osteoblast differentiation"/>
    <property type="evidence" value="ECO:0007669"/>
    <property type="project" value="TreeGrafter"/>
</dbReference>
<dbReference type="GO" id="GO:0030500">
    <property type="term" value="P:regulation of bone mineralization"/>
    <property type="evidence" value="ECO:0007669"/>
    <property type="project" value="InterPro"/>
</dbReference>
<dbReference type="GO" id="GO:1900076">
    <property type="term" value="P:regulation of cellular response to insulin stimulus"/>
    <property type="evidence" value="ECO:0007669"/>
    <property type="project" value="InterPro"/>
</dbReference>
<dbReference type="GO" id="GO:0032571">
    <property type="term" value="P:response to vitamin K"/>
    <property type="evidence" value="ECO:0007669"/>
    <property type="project" value="InterPro"/>
</dbReference>
<dbReference type="GO" id="GO:0044342">
    <property type="term" value="P:type B pancreatic cell proliferation"/>
    <property type="evidence" value="ECO:0000250"/>
    <property type="project" value="UniProtKB"/>
</dbReference>
<dbReference type="InterPro" id="IPR035972">
    <property type="entry name" value="GLA-like_dom_SF"/>
</dbReference>
<dbReference type="InterPro" id="IPR000294">
    <property type="entry name" value="GLA_domain"/>
</dbReference>
<dbReference type="InterPro" id="IPR039176">
    <property type="entry name" value="Osteocalcin"/>
</dbReference>
<dbReference type="InterPro" id="IPR002384">
    <property type="entry name" value="Osteocalcin/MGP"/>
</dbReference>
<dbReference type="PANTHER" id="PTHR14235">
    <property type="entry name" value="OSTEOCALCIN"/>
    <property type="match status" value="1"/>
</dbReference>
<dbReference type="PANTHER" id="PTHR14235:SF0">
    <property type="entry name" value="OSTEOCALCIN"/>
    <property type="match status" value="1"/>
</dbReference>
<dbReference type="PRINTS" id="PR00002">
    <property type="entry name" value="GLABONE"/>
</dbReference>
<dbReference type="SUPFAM" id="SSF57630">
    <property type="entry name" value="GLA-domain"/>
    <property type="match status" value="1"/>
</dbReference>
<dbReference type="PROSITE" id="PS00011">
    <property type="entry name" value="GLA_1"/>
    <property type="match status" value="1"/>
</dbReference>
<dbReference type="PROSITE" id="PS50998">
    <property type="entry name" value="GLA_2"/>
    <property type="match status" value="1"/>
</dbReference>
<organism evidence="6">
    <name type="scientific">Solea senegalensis</name>
    <name type="common">Senegalese sole</name>
    <dbReference type="NCBI Taxonomy" id="28829"/>
    <lineage>
        <taxon>Eukaryota</taxon>
        <taxon>Metazoa</taxon>
        <taxon>Chordata</taxon>
        <taxon>Craniata</taxon>
        <taxon>Vertebrata</taxon>
        <taxon>Euteleostomi</taxon>
        <taxon>Actinopterygii</taxon>
        <taxon>Neopterygii</taxon>
        <taxon>Teleostei</taxon>
        <taxon>Neoteleostei</taxon>
        <taxon>Acanthomorphata</taxon>
        <taxon>Carangaria</taxon>
        <taxon>Pleuronectiformes</taxon>
        <taxon>Pleuronectoidei</taxon>
        <taxon>Soleidae</taxon>
        <taxon>Solea</taxon>
    </lineage>
</organism>
<name>OSTC2_SOLSE</name>
<protein>
    <recommendedName>
        <fullName evidence="6">Osteocalcin 2</fullName>
        <shortName evidence="6">SseOC2</shortName>
    </recommendedName>
    <alternativeName>
        <fullName evidence="6">Bone Gla protein</fullName>
        <shortName evidence="3">BGP</shortName>
    </alternativeName>
    <alternativeName>
        <fullName evidence="3">Gamma-carboxyglutamic acid-containing protein</fullName>
    </alternativeName>
</protein>
<evidence type="ECO:0000250" key="1">
    <source>
        <dbReference type="UniProtKB" id="P02820"/>
    </source>
</evidence>
<evidence type="ECO:0000250" key="2">
    <source>
        <dbReference type="UniProtKB" id="P86546"/>
    </source>
</evidence>
<evidence type="ECO:0000250" key="3">
    <source>
        <dbReference type="UniProtKB" id="Q800Y1"/>
    </source>
</evidence>
<evidence type="ECO:0000255" key="4">
    <source>
        <dbReference type="PROSITE-ProRule" id="PRU00463"/>
    </source>
</evidence>
<evidence type="ECO:0000269" key="5">
    <source>
    </source>
</evidence>
<evidence type="ECO:0000303" key="6">
    <source>
    </source>
</evidence>
<evidence type="ECO:0000305" key="7"/>
<gene>
    <name evidence="7" type="primary">bglap2</name>
</gene>
<feature type="chain" id="PRO_0000436924" description="Osteocalcin 2" evidence="5">
    <location>
        <begin position="1"/>
        <end position="46"/>
    </location>
</feature>
<feature type="domain" description="Gla" evidence="4">
    <location>
        <begin position="1"/>
        <end position="43"/>
    </location>
</feature>
<feature type="binding site" evidence="1">
    <location>
        <position position="13"/>
    </location>
    <ligand>
        <name>Ca(2+)</name>
        <dbReference type="ChEBI" id="CHEBI:29108"/>
        <label>1</label>
    </ligand>
</feature>
<feature type="binding site" evidence="1">
    <location>
        <position position="17"/>
    </location>
    <ligand>
        <name>Ca(2+)</name>
        <dbReference type="ChEBI" id="CHEBI:29108"/>
        <label>2</label>
    </ligand>
</feature>
<feature type="binding site" evidence="1">
    <location>
        <position position="20"/>
    </location>
    <ligand>
        <name>Ca(2+)</name>
        <dbReference type="ChEBI" id="CHEBI:29108"/>
        <label>2</label>
    </ligand>
</feature>
<feature type="binding site" evidence="1">
    <location>
        <position position="20"/>
    </location>
    <ligand>
        <name>Ca(2+)</name>
        <dbReference type="ChEBI" id="CHEBI:29108"/>
        <label>3</label>
    </ligand>
</feature>
<feature type="binding site" evidence="1">
    <location>
        <position position="26"/>
    </location>
    <ligand>
        <name>Ca(2+)</name>
        <dbReference type="ChEBI" id="CHEBI:29108"/>
        <label>3</label>
    </ligand>
</feature>
<feature type="modified residue" description="Phosphothreonine" evidence="6">
    <location>
        <position position="6"/>
    </location>
</feature>
<feature type="modified residue" description="4-carboxyglutamate" evidence="3">
    <location>
        <position position="13"/>
    </location>
</feature>
<feature type="modified residue" description="4-carboxyglutamate" evidence="4">
    <location>
        <position position="17"/>
    </location>
</feature>
<feature type="modified residue" description="4-carboxyglutamate" evidence="4">
    <location>
        <position position="20"/>
    </location>
</feature>
<feature type="modified residue" description="4-carboxyglutamate" evidence="3">
    <location>
        <position position="27"/>
    </location>
</feature>
<feature type="disulfide bond" evidence="4">
    <location>
        <begin position="19"/>
        <end position="25"/>
    </location>
</feature>